<proteinExistence type="inferred from homology"/>
<gene>
    <name evidence="1" type="primary">fhs</name>
    <name type="ordered locus">SACOL1782</name>
</gene>
<sequence>MTHLSDLDIANQSTLQPIKDIAASVGISEDALEPYGHYKAKIDINKITPRENKGKVVLVTAMSPTPAGEGKSTVTVGLADAFHELNKNVMVALREPALGPTFGIKGGATGGGYAQVLPMEDINLHFNGDFHAITTANNALSAFIDNHIHQGNELGIDQRRIEWKRVLDMNDRALRHVNVGLGGPTNGVPREDGFNITVASEIMAILCLSRSIKDLKDKISRITIGYTRDRKPVTVADLKVEGALAMILKDAIKPNLVQSIEGTPTLVHGGPFANIAHGCNSILATETARDLADIVVTEAGFGSDLGAEKFMDIKVREAGFDPAAVVVVATIRALKMHGGVAKDNLKEENVEAVKAGIVNLERHVNNIKKFGVEPVVAINAFIHDTDAEVEYVKSWAKENNVRIALTEVWKKGGKGGVDLANEVLEVIDQPNSFKPLYELELPLEQKIEKIVTEIYGGSKVTFSSKAQKQLKQFKENGWDNYPVCMAKTQYSFSDDQTLLGAPSGFEITIRELEAKTGAGFIVALTGAIMTMPGLPKKPAALNMDVTDDGHAIGLF</sequence>
<name>FTHS_STAAC</name>
<accession>Q5HF42</accession>
<reference key="1">
    <citation type="journal article" date="2005" name="J. Bacteriol.">
        <title>Insights on evolution of virulence and resistance from the complete genome analysis of an early methicillin-resistant Staphylococcus aureus strain and a biofilm-producing methicillin-resistant Staphylococcus epidermidis strain.</title>
        <authorList>
            <person name="Gill S.R."/>
            <person name="Fouts D.E."/>
            <person name="Archer G.L."/>
            <person name="Mongodin E.F."/>
            <person name="DeBoy R.T."/>
            <person name="Ravel J."/>
            <person name="Paulsen I.T."/>
            <person name="Kolonay J.F."/>
            <person name="Brinkac L.M."/>
            <person name="Beanan M.J."/>
            <person name="Dodson R.J."/>
            <person name="Daugherty S.C."/>
            <person name="Madupu R."/>
            <person name="Angiuoli S.V."/>
            <person name="Durkin A.S."/>
            <person name="Haft D.H."/>
            <person name="Vamathevan J.J."/>
            <person name="Khouri H."/>
            <person name="Utterback T.R."/>
            <person name="Lee C."/>
            <person name="Dimitrov G."/>
            <person name="Jiang L."/>
            <person name="Qin H."/>
            <person name="Weidman J."/>
            <person name="Tran K."/>
            <person name="Kang K.H."/>
            <person name="Hance I.R."/>
            <person name="Nelson K.E."/>
            <person name="Fraser C.M."/>
        </authorList>
    </citation>
    <scope>NUCLEOTIDE SEQUENCE [LARGE SCALE GENOMIC DNA]</scope>
    <source>
        <strain>COL</strain>
    </source>
</reference>
<dbReference type="EC" id="6.3.4.3" evidence="1"/>
<dbReference type="EMBL" id="CP000046">
    <property type="protein sequence ID" value="AAW38310.1"/>
    <property type="status" value="ALT_INIT"/>
    <property type="molecule type" value="Genomic_DNA"/>
</dbReference>
<dbReference type="RefSeq" id="WP_000149405.1">
    <property type="nucleotide sequence ID" value="NC_002951.2"/>
</dbReference>
<dbReference type="SMR" id="Q5HF42"/>
<dbReference type="KEGG" id="sac:SACOL1782"/>
<dbReference type="HOGENOM" id="CLU_003601_3_3_9"/>
<dbReference type="UniPathway" id="UPA00193"/>
<dbReference type="Proteomes" id="UP000000530">
    <property type="component" value="Chromosome"/>
</dbReference>
<dbReference type="GO" id="GO:0005524">
    <property type="term" value="F:ATP binding"/>
    <property type="evidence" value="ECO:0007669"/>
    <property type="project" value="UniProtKB-UniRule"/>
</dbReference>
<dbReference type="GO" id="GO:0004329">
    <property type="term" value="F:formate-tetrahydrofolate ligase activity"/>
    <property type="evidence" value="ECO:0007669"/>
    <property type="project" value="UniProtKB-UniRule"/>
</dbReference>
<dbReference type="GO" id="GO:0035999">
    <property type="term" value="P:tetrahydrofolate interconversion"/>
    <property type="evidence" value="ECO:0007669"/>
    <property type="project" value="UniProtKB-UniRule"/>
</dbReference>
<dbReference type="CDD" id="cd00477">
    <property type="entry name" value="FTHFS"/>
    <property type="match status" value="1"/>
</dbReference>
<dbReference type="FunFam" id="3.30.1510.10:FF:000001">
    <property type="entry name" value="Formate--tetrahydrofolate ligase"/>
    <property type="match status" value="1"/>
</dbReference>
<dbReference type="FunFam" id="3.10.410.10:FF:000001">
    <property type="entry name" value="Putative formate--tetrahydrofolate ligase"/>
    <property type="match status" value="1"/>
</dbReference>
<dbReference type="Gene3D" id="3.30.1510.10">
    <property type="entry name" value="Domain 2, N(10)-formyltetrahydrofolate synthetase"/>
    <property type="match status" value="1"/>
</dbReference>
<dbReference type="Gene3D" id="3.10.410.10">
    <property type="entry name" value="Formyltetrahydrofolate synthetase, domain 3"/>
    <property type="match status" value="1"/>
</dbReference>
<dbReference type="Gene3D" id="3.40.50.300">
    <property type="entry name" value="P-loop containing nucleotide triphosphate hydrolases"/>
    <property type="match status" value="1"/>
</dbReference>
<dbReference type="HAMAP" id="MF_01543">
    <property type="entry name" value="FTHFS"/>
    <property type="match status" value="1"/>
</dbReference>
<dbReference type="InterPro" id="IPR000559">
    <property type="entry name" value="Formate_THF_ligase"/>
</dbReference>
<dbReference type="InterPro" id="IPR020628">
    <property type="entry name" value="Formate_THF_ligase_CS"/>
</dbReference>
<dbReference type="InterPro" id="IPR027417">
    <property type="entry name" value="P-loop_NTPase"/>
</dbReference>
<dbReference type="NCBIfam" id="NF010030">
    <property type="entry name" value="PRK13505.1"/>
    <property type="match status" value="1"/>
</dbReference>
<dbReference type="Pfam" id="PF01268">
    <property type="entry name" value="FTHFS"/>
    <property type="match status" value="1"/>
</dbReference>
<dbReference type="SUPFAM" id="SSF52540">
    <property type="entry name" value="P-loop containing nucleoside triphosphate hydrolases"/>
    <property type="match status" value="1"/>
</dbReference>
<dbReference type="PROSITE" id="PS00721">
    <property type="entry name" value="FTHFS_1"/>
    <property type="match status" value="1"/>
</dbReference>
<dbReference type="PROSITE" id="PS00722">
    <property type="entry name" value="FTHFS_2"/>
    <property type="match status" value="1"/>
</dbReference>
<comment type="catalytic activity">
    <reaction evidence="1">
        <text>(6S)-5,6,7,8-tetrahydrofolate + formate + ATP = (6R)-10-formyltetrahydrofolate + ADP + phosphate</text>
        <dbReference type="Rhea" id="RHEA:20221"/>
        <dbReference type="ChEBI" id="CHEBI:15740"/>
        <dbReference type="ChEBI" id="CHEBI:30616"/>
        <dbReference type="ChEBI" id="CHEBI:43474"/>
        <dbReference type="ChEBI" id="CHEBI:57453"/>
        <dbReference type="ChEBI" id="CHEBI:195366"/>
        <dbReference type="ChEBI" id="CHEBI:456216"/>
        <dbReference type="EC" id="6.3.4.3"/>
    </reaction>
</comment>
<comment type="pathway">
    <text evidence="1">One-carbon metabolism; tetrahydrofolate interconversion.</text>
</comment>
<comment type="similarity">
    <text evidence="1">Belongs to the formate--tetrahydrofolate ligase family.</text>
</comment>
<comment type="sequence caution" evidence="2">
    <conflict type="erroneous initiation">
        <sequence resource="EMBL-CDS" id="AAW38310"/>
    </conflict>
</comment>
<feature type="chain" id="PRO_0000199375" description="Formate--tetrahydrofolate ligase">
    <location>
        <begin position="1"/>
        <end position="555"/>
    </location>
</feature>
<feature type="binding site" evidence="1">
    <location>
        <begin position="65"/>
        <end position="72"/>
    </location>
    <ligand>
        <name>ATP</name>
        <dbReference type="ChEBI" id="CHEBI:30616"/>
    </ligand>
</feature>
<protein>
    <recommendedName>
        <fullName evidence="1">Formate--tetrahydrofolate ligase</fullName>
        <ecNumber evidence="1">6.3.4.3</ecNumber>
    </recommendedName>
    <alternativeName>
        <fullName evidence="1">Formyltetrahydrofolate synthetase</fullName>
        <shortName evidence="1">FHS</shortName>
        <shortName evidence="1">FTHFS</shortName>
    </alternativeName>
</protein>
<keyword id="KW-0067">ATP-binding</keyword>
<keyword id="KW-0436">Ligase</keyword>
<keyword id="KW-0547">Nucleotide-binding</keyword>
<keyword id="KW-0554">One-carbon metabolism</keyword>
<evidence type="ECO:0000255" key="1">
    <source>
        <dbReference type="HAMAP-Rule" id="MF_01543"/>
    </source>
</evidence>
<evidence type="ECO:0000305" key="2"/>
<organism>
    <name type="scientific">Staphylococcus aureus (strain COL)</name>
    <dbReference type="NCBI Taxonomy" id="93062"/>
    <lineage>
        <taxon>Bacteria</taxon>
        <taxon>Bacillati</taxon>
        <taxon>Bacillota</taxon>
        <taxon>Bacilli</taxon>
        <taxon>Bacillales</taxon>
        <taxon>Staphylococcaceae</taxon>
        <taxon>Staphylococcus</taxon>
    </lineage>
</organism>